<sequence>MEKLASAKTCLKLLQVMPGVQQAALLPGGGLGVLASPLQNLIQMQQVRHRQTKHWKPEFKRLRKLKFVKMDLPNLREKQEDITKEEMRSRMKERGVLPPRPWMERPFHISCTGGIFEAYVPPEGDGKKSIISTSGAKQKLEFLEKKSKSLMAVRKIRSYDENFSSDDFGAEAQDIYIQAHTHMAAKDKYKIREFVSERCYPEMMHNVKDKTIRWKFLQSLEPPRVVHARVTEVITKENQFAQVTVRFHSQQMLAIYDRFGRLMHGSEIITKDVLEYVVFEKHISNEYGKWRLHDKIIPDWLPAKQPAPITYRLIEDAEEPPKELSAGDAEVKQVDSVGEQSKEQLPLATPVESHTKPSLAI</sequence>
<gene>
    <name type="primary">mRpL45</name>
    <name type="ORF">CG6949</name>
</gene>
<evidence type="ECO:0000250" key="1"/>
<evidence type="ECO:0000255" key="2"/>
<evidence type="ECO:0000256" key="3">
    <source>
        <dbReference type="SAM" id="MobiDB-lite"/>
    </source>
</evidence>
<evidence type="ECO:0000305" key="4"/>
<protein>
    <recommendedName>
        <fullName evidence="4">Large ribosomal subunit protein mL45</fullName>
    </recommendedName>
    <alternativeName>
        <fullName evidence="4">39S ribosomal protein L45, mitochondrial</fullName>
        <shortName>L45mt</shortName>
        <shortName>MRP-L45</shortName>
    </alternativeName>
</protein>
<reference key="1">
    <citation type="journal article" date="2000" name="Science">
        <title>The genome sequence of Drosophila melanogaster.</title>
        <authorList>
            <person name="Adams M.D."/>
            <person name="Celniker S.E."/>
            <person name="Holt R.A."/>
            <person name="Evans C.A."/>
            <person name="Gocayne J.D."/>
            <person name="Amanatides P.G."/>
            <person name="Scherer S.E."/>
            <person name="Li P.W."/>
            <person name="Hoskins R.A."/>
            <person name="Galle R.F."/>
            <person name="George R.A."/>
            <person name="Lewis S.E."/>
            <person name="Richards S."/>
            <person name="Ashburner M."/>
            <person name="Henderson S.N."/>
            <person name="Sutton G.G."/>
            <person name="Wortman J.R."/>
            <person name="Yandell M.D."/>
            <person name="Zhang Q."/>
            <person name="Chen L.X."/>
            <person name="Brandon R.C."/>
            <person name="Rogers Y.-H.C."/>
            <person name="Blazej R.G."/>
            <person name="Champe M."/>
            <person name="Pfeiffer B.D."/>
            <person name="Wan K.H."/>
            <person name="Doyle C."/>
            <person name="Baxter E.G."/>
            <person name="Helt G."/>
            <person name="Nelson C.R."/>
            <person name="Miklos G.L.G."/>
            <person name="Abril J.F."/>
            <person name="Agbayani A."/>
            <person name="An H.-J."/>
            <person name="Andrews-Pfannkoch C."/>
            <person name="Baldwin D."/>
            <person name="Ballew R.M."/>
            <person name="Basu A."/>
            <person name="Baxendale J."/>
            <person name="Bayraktaroglu L."/>
            <person name="Beasley E.M."/>
            <person name="Beeson K.Y."/>
            <person name="Benos P.V."/>
            <person name="Berman B.P."/>
            <person name="Bhandari D."/>
            <person name="Bolshakov S."/>
            <person name="Borkova D."/>
            <person name="Botchan M.R."/>
            <person name="Bouck J."/>
            <person name="Brokstein P."/>
            <person name="Brottier P."/>
            <person name="Burtis K.C."/>
            <person name="Busam D.A."/>
            <person name="Butler H."/>
            <person name="Cadieu E."/>
            <person name="Center A."/>
            <person name="Chandra I."/>
            <person name="Cherry J.M."/>
            <person name="Cawley S."/>
            <person name="Dahlke C."/>
            <person name="Davenport L.B."/>
            <person name="Davies P."/>
            <person name="de Pablos B."/>
            <person name="Delcher A."/>
            <person name="Deng Z."/>
            <person name="Mays A.D."/>
            <person name="Dew I."/>
            <person name="Dietz S.M."/>
            <person name="Dodson K."/>
            <person name="Doup L.E."/>
            <person name="Downes M."/>
            <person name="Dugan-Rocha S."/>
            <person name="Dunkov B.C."/>
            <person name="Dunn P."/>
            <person name="Durbin K.J."/>
            <person name="Evangelista C.C."/>
            <person name="Ferraz C."/>
            <person name="Ferriera S."/>
            <person name="Fleischmann W."/>
            <person name="Fosler C."/>
            <person name="Gabrielian A.E."/>
            <person name="Garg N.S."/>
            <person name="Gelbart W.M."/>
            <person name="Glasser K."/>
            <person name="Glodek A."/>
            <person name="Gong F."/>
            <person name="Gorrell J.H."/>
            <person name="Gu Z."/>
            <person name="Guan P."/>
            <person name="Harris M."/>
            <person name="Harris N.L."/>
            <person name="Harvey D.A."/>
            <person name="Heiman T.J."/>
            <person name="Hernandez J.R."/>
            <person name="Houck J."/>
            <person name="Hostin D."/>
            <person name="Houston K.A."/>
            <person name="Howland T.J."/>
            <person name="Wei M.-H."/>
            <person name="Ibegwam C."/>
            <person name="Jalali M."/>
            <person name="Kalush F."/>
            <person name="Karpen G.H."/>
            <person name="Ke Z."/>
            <person name="Kennison J.A."/>
            <person name="Ketchum K.A."/>
            <person name="Kimmel B.E."/>
            <person name="Kodira C.D."/>
            <person name="Kraft C.L."/>
            <person name="Kravitz S."/>
            <person name="Kulp D."/>
            <person name="Lai Z."/>
            <person name="Lasko P."/>
            <person name="Lei Y."/>
            <person name="Levitsky A.A."/>
            <person name="Li J.H."/>
            <person name="Li Z."/>
            <person name="Liang Y."/>
            <person name="Lin X."/>
            <person name="Liu X."/>
            <person name="Mattei B."/>
            <person name="McIntosh T.C."/>
            <person name="McLeod M.P."/>
            <person name="McPherson D."/>
            <person name="Merkulov G."/>
            <person name="Milshina N.V."/>
            <person name="Mobarry C."/>
            <person name="Morris J."/>
            <person name="Moshrefi A."/>
            <person name="Mount S.M."/>
            <person name="Moy M."/>
            <person name="Murphy B."/>
            <person name="Murphy L."/>
            <person name="Muzny D.M."/>
            <person name="Nelson D.L."/>
            <person name="Nelson D.R."/>
            <person name="Nelson K.A."/>
            <person name="Nixon K."/>
            <person name="Nusskern D.R."/>
            <person name="Pacleb J.M."/>
            <person name="Palazzolo M."/>
            <person name="Pittman G.S."/>
            <person name="Pan S."/>
            <person name="Pollard J."/>
            <person name="Puri V."/>
            <person name="Reese M.G."/>
            <person name="Reinert K."/>
            <person name="Remington K."/>
            <person name="Saunders R.D.C."/>
            <person name="Scheeler F."/>
            <person name="Shen H."/>
            <person name="Shue B.C."/>
            <person name="Siden-Kiamos I."/>
            <person name="Simpson M."/>
            <person name="Skupski M.P."/>
            <person name="Smith T.J."/>
            <person name="Spier E."/>
            <person name="Spradling A.C."/>
            <person name="Stapleton M."/>
            <person name="Strong R."/>
            <person name="Sun E."/>
            <person name="Svirskas R."/>
            <person name="Tector C."/>
            <person name="Turner R."/>
            <person name="Venter E."/>
            <person name="Wang A.H."/>
            <person name="Wang X."/>
            <person name="Wang Z.-Y."/>
            <person name="Wassarman D.A."/>
            <person name="Weinstock G.M."/>
            <person name="Weissenbach J."/>
            <person name="Williams S.M."/>
            <person name="Woodage T."/>
            <person name="Worley K.C."/>
            <person name="Wu D."/>
            <person name="Yang S."/>
            <person name="Yao Q.A."/>
            <person name="Ye J."/>
            <person name="Yeh R.-F."/>
            <person name="Zaveri J.S."/>
            <person name="Zhan M."/>
            <person name="Zhang G."/>
            <person name="Zhao Q."/>
            <person name="Zheng L."/>
            <person name="Zheng X.H."/>
            <person name="Zhong F.N."/>
            <person name="Zhong W."/>
            <person name="Zhou X."/>
            <person name="Zhu S.C."/>
            <person name="Zhu X."/>
            <person name="Smith H.O."/>
            <person name="Gibbs R.A."/>
            <person name="Myers E.W."/>
            <person name="Rubin G.M."/>
            <person name="Venter J.C."/>
        </authorList>
    </citation>
    <scope>NUCLEOTIDE SEQUENCE [LARGE SCALE GENOMIC DNA]</scope>
    <source>
        <strain>Berkeley</strain>
    </source>
</reference>
<reference key="2">
    <citation type="journal article" date="2002" name="Genome Biol.">
        <title>Annotation of the Drosophila melanogaster euchromatic genome: a systematic review.</title>
        <authorList>
            <person name="Misra S."/>
            <person name="Crosby M.A."/>
            <person name="Mungall C.J."/>
            <person name="Matthews B.B."/>
            <person name="Campbell K.S."/>
            <person name="Hradecky P."/>
            <person name="Huang Y."/>
            <person name="Kaminker J.S."/>
            <person name="Millburn G.H."/>
            <person name="Prochnik S.E."/>
            <person name="Smith C.D."/>
            <person name="Tupy J.L."/>
            <person name="Whitfield E.J."/>
            <person name="Bayraktaroglu L."/>
            <person name="Berman B.P."/>
            <person name="Bettencourt B.R."/>
            <person name="Celniker S.E."/>
            <person name="de Grey A.D.N.J."/>
            <person name="Drysdale R.A."/>
            <person name="Harris N.L."/>
            <person name="Richter J."/>
            <person name="Russo S."/>
            <person name="Schroeder A.J."/>
            <person name="Shu S.Q."/>
            <person name="Stapleton M."/>
            <person name="Yamada C."/>
            <person name="Ashburner M."/>
            <person name="Gelbart W.M."/>
            <person name="Rubin G.M."/>
            <person name="Lewis S.E."/>
        </authorList>
    </citation>
    <scope>GENOME REANNOTATION</scope>
    <source>
        <strain>Berkeley</strain>
    </source>
</reference>
<reference key="3">
    <citation type="journal article" date="2002" name="Genome Biol.">
        <title>A Drosophila full-length cDNA resource.</title>
        <authorList>
            <person name="Stapleton M."/>
            <person name="Carlson J.W."/>
            <person name="Brokstein P."/>
            <person name="Yu C."/>
            <person name="Champe M."/>
            <person name="George R.A."/>
            <person name="Guarin H."/>
            <person name="Kronmiller B."/>
            <person name="Pacleb J.M."/>
            <person name="Park S."/>
            <person name="Wan K.H."/>
            <person name="Rubin G.M."/>
            <person name="Celniker S.E."/>
        </authorList>
    </citation>
    <scope>NUCLEOTIDE SEQUENCE [LARGE SCALE MRNA]</scope>
    <source>
        <strain>Berkeley</strain>
    </source>
</reference>
<keyword id="KW-0496">Mitochondrion</keyword>
<keyword id="KW-1185">Reference proteome</keyword>
<keyword id="KW-0687">Ribonucleoprotein</keyword>
<keyword id="KW-0689">Ribosomal protein</keyword>
<keyword id="KW-0809">Transit peptide</keyword>
<proteinExistence type="evidence at transcript level"/>
<accession>Q9VCX3</accession>
<name>RM45_DROME</name>
<dbReference type="EMBL" id="AE014297">
    <property type="protein sequence ID" value="AAF56032.1"/>
    <property type="molecule type" value="Genomic_DNA"/>
</dbReference>
<dbReference type="EMBL" id="AY071013">
    <property type="protein sequence ID" value="AAL48635.1"/>
    <property type="molecule type" value="mRNA"/>
</dbReference>
<dbReference type="RefSeq" id="NP_651072.1">
    <property type="nucleotide sequence ID" value="NM_142815.4"/>
</dbReference>
<dbReference type="SMR" id="Q9VCX3"/>
<dbReference type="BioGRID" id="67623">
    <property type="interactions" value="4"/>
</dbReference>
<dbReference type="DIP" id="DIP-23683N"/>
<dbReference type="FunCoup" id="Q9VCX3">
    <property type="interactions" value="1437"/>
</dbReference>
<dbReference type="IntAct" id="Q9VCX3">
    <property type="interactions" value="6"/>
</dbReference>
<dbReference type="STRING" id="7227.FBpp0083665"/>
<dbReference type="PaxDb" id="7227-FBpp0083665"/>
<dbReference type="DNASU" id="42671"/>
<dbReference type="EnsemblMetazoa" id="FBtr0084272">
    <property type="protein sequence ID" value="FBpp0083665"/>
    <property type="gene ID" value="FBgn0263863"/>
</dbReference>
<dbReference type="GeneID" id="42671"/>
<dbReference type="KEGG" id="dme:Dmel_CG6949"/>
<dbReference type="AGR" id="FB:FBgn0263863"/>
<dbReference type="CTD" id="84311"/>
<dbReference type="FlyBase" id="FBgn0263863">
    <property type="gene designation" value="mRpL45"/>
</dbReference>
<dbReference type="VEuPathDB" id="VectorBase:FBgn0263863"/>
<dbReference type="eggNOG" id="KOG4599">
    <property type="taxonomic scope" value="Eukaryota"/>
</dbReference>
<dbReference type="GeneTree" id="ENSGT00390000012679"/>
<dbReference type="HOGENOM" id="CLU_038409_1_1_1"/>
<dbReference type="InParanoid" id="Q9VCX3"/>
<dbReference type="OMA" id="HTHMAAK"/>
<dbReference type="OrthoDB" id="19619at2759"/>
<dbReference type="PhylomeDB" id="Q9VCX3"/>
<dbReference type="Reactome" id="R-DME-5389840">
    <property type="pathway name" value="Mitochondrial translation elongation"/>
</dbReference>
<dbReference type="Reactome" id="R-DME-5419276">
    <property type="pathway name" value="Mitochondrial translation termination"/>
</dbReference>
<dbReference type="BioGRID-ORCS" id="42671">
    <property type="hits" value="0 hits in 1 CRISPR screen"/>
</dbReference>
<dbReference type="ChiTaRS" id="mRpL45">
    <property type="organism name" value="fly"/>
</dbReference>
<dbReference type="GenomeRNAi" id="42671"/>
<dbReference type="PRO" id="PR:Q9VCX3"/>
<dbReference type="Proteomes" id="UP000000803">
    <property type="component" value="Chromosome 3R"/>
</dbReference>
<dbReference type="Bgee" id="FBgn0263863">
    <property type="expression patterns" value="Expressed in adult enteroendocrine precursor cell in adult midgut (Drosophila) and 99 other cell types or tissues"/>
</dbReference>
<dbReference type="GO" id="GO:0005762">
    <property type="term" value="C:mitochondrial large ribosomal subunit"/>
    <property type="evidence" value="ECO:0000250"/>
    <property type="project" value="FlyBase"/>
</dbReference>
<dbReference type="GO" id="GO:0005739">
    <property type="term" value="C:mitochondrion"/>
    <property type="evidence" value="ECO:0000318"/>
    <property type="project" value="GO_Central"/>
</dbReference>
<dbReference type="GO" id="GO:0003735">
    <property type="term" value="F:structural constituent of ribosome"/>
    <property type="evidence" value="ECO:0000304"/>
    <property type="project" value="FlyBase"/>
</dbReference>
<dbReference type="GO" id="GO:0032543">
    <property type="term" value="P:mitochondrial translation"/>
    <property type="evidence" value="ECO:0000304"/>
    <property type="project" value="FlyBase"/>
</dbReference>
<dbReference type="FunFam" id="3.10.450.240:FF:000003">
    <property type="entry name" value="39S ribosomal protein L45, mitochondrial"/>
    <property type="match status" value="1"/>
</dbReference>
<dbReference type="Gene3D" id="3.10.450.240">
    <property type="match status" value="1"/>
</dbReference>
<dbReference type="InterPro" id="IPR051975">
    <property type="entry name" value="mtLSU_mL45"/>
</dbReference>
<dbReference type="InterPro" id="IPR032710">
    <property type="entry name" value="NTF2-like_dom_sf"/>
</dbReference>
<dbReference type="InterPro" id="IPR007379">
    <property type="entry name" value="Tim44-like_dom"/>
</dbReference>
<dbReference type="PANTHER" id="PTHR28554">
    <property type="entry name" value="39S RIBOSOMAL PROTEIN L45, MITOCHONDRIAL"/>
    <property type="match status" value="1"/>
</dbReference>
<dbReference type="PANTHER" id="PTHR28554:SF1">
    <property type="entry name" value="LARGE RIBOSOMAL SUBUNIT PROTEIN ML45"/>
    <property type="match status" value="1"/>
</dbReference>
<dbReference type="Pfam" id="PF04280">
    <property type="entry name" value="Tim44"/>
    <property type="match status" value="1"/>
</dbReference>
<dbReference type="SMART" id="SM00978">
    <property type="entry name" value="Tim44"/>
    <property type="match status" value="1"/>
</dbReference>
<dbReference type="SUPFAM" id="SSF54427">
    <property type="entry name" value="NTF2-like"/>
    <property type="match status" value="1"/>
</dbReference>
<feature type="transit peptide" description="Mitochondrion" evidence="2">
    <location>
        <begin position="1"/>
        <end status="unknown"/>
    </location>
</feature>
<feature type="chain" id="PRO_0000030566" description="Large ribosomal subunit protein mL45">
    <location>
        <begin status="unknown"/>
        <end position="361"/>
    </location>
</feature>
<feature type="region of interest" description="Disordered" evidence="3">
    <location>
        <begin position="319"/>
        <end position="361"/>
    </location>
</feature>
<comment type="subcellular location">
    <subcellularLocation>
        <location evidence="1">Mitochondrion</location>
    </subcellularLocation>
</comment>
<comment type="similarity">
    <text evidence="4">Belongs to the mitochondrion-specific ribosomal protein mL45 family.</text>
</comment>
<organism>
    <name type="scientific">Drosophila melanogaster</name>
    <name type="common">Fruit fly</name>
    <dbReference type="NCBI Taxonomy" id="7227"/>
    <lineage>
        <taxon>Eukaryota</taxon>
        <taxon>Metazoa</taxon>
        <taxon>Ecdysozoa</taxon>
        <taxon>Arthropoda</taxon>
        <taxon>Hexapoda</taxon>
        <taxon>Insecta</taxon>
        <taxon>Pterygota</taxon>
        <taxon>Neoptera</taxon>
        <taxon>Endopterygota</taxon>
        <taxon>Diptera</taxon>
        <taxon>Brachycera</taxon>
        <taxon>Muscomorpha</taxon>
        <taxon>Ephydroidea</taxon>
        <taxon>Drosophilidae</taxon>
        <taxon>Drosophila</taxon>
        <taxon>Sophophora</taxon>
    </lineage>
</organism>